<organism>
    <name type="scientific">Schizosaccharomyces pombe (strain 972 / ATCC 24843)</name>
    <name type="common">Fission yeast</name>
    <dbReference type="NCBI Taxonomy" id="284812"/>
    <lineage>
        <taxon>Eukaryota</taxon>
        <taxon>Fungi</taxon>
        <taxon>Dikarya</taxon>
        <taxon>Ascomycota</taxon>
        <taxon>Taphrinomycotina</taxon>
        <taxon>Schizosaccharomycetes</taxon>
        <taxon>Schizosaccharomycetales</taxon>
        <taxon>Schizosaccharomycetaceae</taxon>
        <taxon>Schizosaccharomyces</taxon>
    </lineage>
</organism>
<gene>
    <name type="ORF">SPCC191.04c</name>
</gene>
<reference key="1">
    <citation type="journal article" date="2002" name="Nature">
        <title>The genome sequence of Schizosaccharomyces pombe.</title>
        <authorList>
            <person name="Wood V."/>
            <person name="Gwilliam R."/>
            <person name="Rajandream M.A."/>
            <person name="Lyne M.H."/>
            <person name="Lyne R."/>
            <person name="Stewart A."/>
            <person name="Sgouros J.G."/>
            <person name="Peat N."/>
            <person name="Hayles J."/>
            <person name="Baker S.G."/>
            <person name="Basham D."/>
            <person name="Bowman S."/>
            <person name="Brooks K."/>
            <person name="Brown D."/>
            <person name="Brown S."/>
            <person name="Chillingworth T."/>
            <person name="Churcher C.M."/>
            <person name="Collins M."/>
            <person name="Connor R."/>
            <person name="Cronin A."/>
            <person name="Davis P."/>
            <person name="Feltwell T."/>
            <person name="Fraser A."/>
            <person name="Gentles S."/>
            <person name="Goble A."/>
            <person name="Hamlin N."/>
            <person name="Harris D.E."/>
            <person name="Hidalgo J."/>
            <person name="Hodgson G."/>
            <person name="Holroyd S."/>
            <person name="Hornsby T."/>
            <person name="Howarth S."/>
            <person name="Huckle E.J."/>
            <person name="Hunt S."/>
            <person name="Jagels K."/>
            <person name="James K.D."/>
            <person name="Jones L."/>
            <person name="Jones M."/>
            <person name="Leather S."/>
            <person name="McDonald S."/>
            <person name="McLean J."/>
            <person name="Mooney P."/>
            <person name="Moule S."/>
            <person name="Mungall K.L."/>
            <person name="Murphy L.D."/>
            <person name="Niblett D."/>
            <person name="Odell C."/>
            <person name="Oliver K."/>
            <person name="O'Neil S."/>
            <person name="Pearson D."/>
            <person name="Quail M.A."/>
            <person name="Rabbinowitsch E."/>
            <person name="Rutherford K.M."/>
            <person name="Rutter S."/>
            <person name="Saunders D."/>
            <person name="Seeger K."/>
            <person name="Sharp S."/>
            <person name="Skelton J."/>
            <person name="Simmonds M.N."/>
            <person name="Squares R."/>
            <person name="Squares S."/>
            <person name="Stevens K."/>
            <person name="Taylor K."/>
            <person name="Taylor R.G."/>
            <person name="Tivey A."/>
            <person name="Walsh S.V."/>
            <person name="Warren T."/>
            <person name="Whitehead S."/>
            <person name="Woodward J.R."/>
            <person name="Volckaert G."/>
            <person name="Aert R."/>
            <person name="Robben J."/>
            <person name="Grymonprez B."/>
            <person name="Weltjens I."/>
            <person name="Vanstreels E."/>
            <person name="Rieger M."/>
            <person name="Schaefer M."/>
            <person name="Mueller-Auer S."/>
            <person name="Gabel C."/>
            <person name="Fuchs M."/>
            <person name="Duesterhoeft A."/>
            <person name="Fritzc C."/>
            <person name="Holzer E."/>
            <person name="Moestl D."/>
            <person name="Hilbert H."/>
            <person name="Borzym K."/>
            <person name="Langer I."/>
            <person name="Beck A."/>
            <person name="Lehrach H."/>
            <person name="Reinhardt R."/>
            <person name="Pohl T.M."/>
            <person name="Eger P."/>
            <person name="Zimmermann W."/>
            <person name="Wedler H."/>
            <person name="Wambutt R."/>
            <person name="Purnelle B."/>
            <person name="Goffeau A."/>
            <person name="Cadieu E."/>
            <person name="Dreano S."/>
            <person name="Gloux S."/>
            <person name="Lelaure V."/>
            <person name="Mottier S."/>
            <person name="Galibert F."/>
            <person name="Aves S.J."/>
            <person name="Xiang Z."/>
            <person name="Hunt C."/>
            <person name="Moore K."/>
            <person name="Hurst S.M."/>
            <person name="Lucas M."/>
            <person name="Rochet M."/>
            <person name="Gaillardin C."/>
            <person name="Tallada V.A."/>
            <person name="Garzon A."/>
            <person name="Thode G."/>
            <person name="Daga R.R."/>
            <person name="Cruzado L."/>
            <person name="Jimenez J."/>
            <person name="Sanchez M."/>
            <person name="del Rey F."/>
            <person name="Benito J."/>
            <person name="Dominguez A."/>
            <person name="Revuelta J.L."/>
            <person name="Moreno S."/>
            <person name="Armstrong J."/>
            <person name="Forsburg S.L."/>
            <person name="Cerutti L."/>
            <person name="Lowe T."/>
            <person name="McCombie W.R."/>
            <person name="Paulsen I."/>
            <person name="Potashkin J."/>
            <person name="Shpakovski G.V."/>
            <person name="Ussery D."/>
            <person name="Barrell B.G."/>
            <person name="Nurse P."/>
        </authorList>
    </citation>
    <scope>NUCLEOTIDE SEQUENCE [LARGE SCALE GENOMIC DNA]</scope>
    <source>
        <strain>972 / ATCC 24843</strain>
    </source>
</reference>
<reference key="2">
    <citation type="journal article" date="2006" name="Nat. Biotechnol.">
        <title>ORFeome cloning and global analysis of protein localization in the fission yeast Schizosaccharomyces pombe.</title>
        <authorList>
            <person name="Matsuyama A."/>
            <person name="Arai R."/>
            <person name="Yashiroda Y."/>
            <person name="Shirai A."/>
            <person name="Kamata A."/>
            <person name="Sekido S."/>
            <person name="Kobayashi Y."/>
            <person name="Hashimoto A."/>
            <person name="Hamamoto M."/>
            <person name="Hiraoka Y."/>
            <person name="Horinouchi S."/>
            <person name="Yoshida M."/>
        </authorList>
    </citation>
    <scope>SUBCELLULAR LOCATION [LARGE SCALE ANALYSIS]</scope>
</reference>
<feature type="chain" id="PRO_0000303976" description="Putative uncharacterized membrane protein C191.04c">
    <location>
        <begin position="1"/>
        <end position="100"/>
    </location>
</feature>
<feature type="transmembrane region" description="Helical" evidence="1">
    <location>
        <begin position="30"/>
        <end position="50"/>
    </location>
</feature>
<feature type="transmembrane region" description="Helical" evidence="1">
    <location>
        <begin position="69"/>
        <end position="89"/>
    </location>
</feature>
<evidence type="ECO:0000255" key="1"/>
<evidence type="ECO:0000269" key="2">
    <source>
    </source>
</evidence>
<name>YQ64_SCHPO</name>
<protein>
    <recommendedName>
        <fullName>Putative uncharacterized membrane protein C191.04c</fullName>
    </recommendedName>
</protein>
<accession>Q9Y7P8</accession>
<proteinExistence type="predicted"/>
<comment type="subcellular location">
    <subcellularLocation>
        <location evidence="2">Cytoplasm</location>
    </subcellularLocation>
    <subcellularLocation>
        <location evidence="2">Nucleus membrane</location>
        <topology evidence="2">Multi-pass membrane protein</topology>
    </subcellularLocation>
</comment>
<keyword id="KW-0963">Cytoplasm</keyword>
<keyword id="KW-0472">Membrane</keyword>
<keyword id="KW-0539">Nucleus</keyword>
<keyword id="KW-1185">Reference proteome</keyword>
<keyword id="KW-0812">Transmembrane</keyword>
<keyword id="KW-1133">Transmembrane helix</keyword>
<dbReference type="EMBL" id="CU329672">
    <property type="protein sequence ID" value="CAB41050.1"/>
    <property type="molecule type" value="Genomic_DNA"/>
</dbReference>
<dbReference type="PIR" id="T41217">
    <property type="entry name" value="T41217"/>
</dbReference>
<dbReference type="RefSeq" id="NP_588293.1">
    <property type="nucleotide sequence ID" value="NM_001023283.2"/>
</dbReference>
<dbReference type="BioGRID" id="275824">
    <property type="interactions" value="2"/>
</dbReference>
<dbReference type="PaxDb" id="4896-SPCC191.04c.1"/>
<dbReference type="EnsemblFungi" id="SPCC191.04c.1">
    <property type="protein sequence ID" value="SPCC191.04c.1:pep"/>
    <property type="gene ID" value="SPCC191.04c"/>
</dbReference>
<dbReference type="KEGG" id="spo:2539254"/>
<dbReference type="PomBase" id="SPCC191.04c"/>
<dbReference type="VEuPathDB" id="FungiDB:SPCC191.04c"/>
<dbReference type="HOGENOM" id="CLU_2307678_0_0_1"/>
<dbReference type="InParanoid" id="Q9Y7P8"/>
<dbReference type="PRO" id="PR:Q9Y7P8"/>
<dbReference type="Proteomes" id="UP000002485">
    <property type="component" value="Chromosome III"/>
</dbReference>
<dbReference type="GO" id="GO:0005829">
    <property type="term" value="C:cytosol"/>
    <property type="evidence" value="ECO:0007005"/>
    <property type="project" value="PomBase"/>
</dbReference>
<dbReference type="GO" id="GO:0031965">
    <property type="term" value="C:nuclear membrane"/>
    <property type="evidence" value="ECO:0007669"/>
    <property type="project" value="UniProtKB-SubCell"/>
</dbReference>
<dbReference type="GO" id="GO:0005634">
    <property type="term" value="C:nucleus"/>
    <property type="evidence" value="ECO:0007005"/>
    <property type="project" value="PomBase"/>
</dbReference>
<sequence>MHSVCSIFLSCSHRVIQAKHPPFPLFHSYFHIPDFLSFVFPFVASPPLAFARRKLDHVPKKFARSIGPFLLIVFLFFNLFPTFFFLPFFPDTTKRPNLAD</sequence>